<dbReference type="EMBL" id="AE006468">
    <property type="protein sequence ID" value="AAL20494.1"/>
    <property type="molecule type" value="Genomic_DNA"/>
</dbReference>
<dbReference type="EMBL" id="D26057">
    <property type="protein sequence ID" value="BAA05054.1"/>
    <property type="molecule type" value="Genomic_DNA"/>
</dbReference>
<dbReference type="RefSeq" id="NP_460535.1">
    <property type="nucleotide sequence ID" value="NC_003197.2"/>
</dbReference>
<dbReference type="RefSeq" id="WP_000198251.1">
    <property type="nucleotide sequence ID" value="NC_003197.2"/>
</dbReference>
<dbReference type="SMR" id="P37593"/>
<dbReference type="STRING" id="99287.STM1576"/>
<dbReference type="PaxDb" id="99287-STM1576"/>
<dbReference type="GeneID" id="1253094"/>
<dbReference type="KEGG" id="stm:STM1576"/>
<dbReference type="PATRIC" id="fig|99287.12.peg.1667"/>
<dbReference type="HOGENOM" id="CLU_033198_1_0_6"/>
<dbReference type="OMA" id="GIITVQM"/>
<dbReference type="PhylomeDB" id="P37593"/>
<dbReference type="BioCyc" id="SENT99287:STM1576-MONOMER"/>
<dbReference type="Proteomes" id="UP000001014">
    <property type="component" value="Chromosome"/>
</dbReference>
<dbReference type="GO" id="GO:0005886">
    <property type="term" value="C:plasma membrane"/>
    <property type="evidence" value="ECO:0000318"/>
    <property type="project" value="GO_Central"/>
</dbReference>
<dbReference type="GO" id="GO:0015112">
    <property type="term" value="F:nitrate transmembrane transporter activity"/>
    <property type="evidence" value="ECO:0007669"/>
    <property type="project" value="InterPro"/>
</dbReference>
<dbReference type="GO" id="GO:0015113">
    <property type="term" value="F:nitrite transmembrane transporter activity"/>
    <property type="evidence" value="ECO:0007669"/>
    <property type="project" value="InterPro"/>
</dbReference>
<dbReference type="GO" id="GO:0042128">
    <property type="term" value="P:nitrate assimilation"/>
    <property type="evidence" value="ECO:0007669"/>
    <property type="project" value="UniProtKB-KW"/>
</dbReference>
<dbReference type="CDD" id="cd17341">
    <property type="entry name" value="MFS_NRT2_like"/>
    <property type="match status" value="1"/>
</dbReference>
<dbReference type="FunFam" id="1.20.1250.20:FF:000024">
    <property type="entry name" value="Nitrite extrusion protein NarK"/>
    <property type="match status" value="1"/>
</dbReference>
<dbReference type="Gene3D" id="1.20.1250.20">
    <property type="entry name" value="MFS general substrate transporter like domains"/>
    <property type="match status" value="1"/>
</dbReference>
<dbReference type="InterPro" id="IPR011701">
    <property type="entry name" value="MFS"/>
</dbReference>
<dbReference type="InterPro" id="IPR036259">
    <property type="entry name" value="MFS_trans_sf"/>
</dbReference>
<dbReference type="InterPro" id="IPR044772">
    <property type="entry name" value="NO3_transporter"/>
</dbReference>
<dbReference type="InterPro" id="IPR004737">
    <property type="entry name" value="NO3_transporter_NarK/NarU-like"/>
</dbReference>
<dbReference type="NCBIfam" id="TIGR00886">
    <property type="entry name" value="2A0108"/>
    <property type="match status" value="1"/>
</dbReference>
<dbReference type="NCBIfam" id="NF011608">
    <property type="entry name" value="PRK15034.1"/>
    <property type="match status" value="1"/>
</dbReference>
<dbReference type="PANTHER" id="PTHR23515">
    <property type="entry name" value="HIGH-AFFINITY NITRATE TRANSPORTER 2.3"/>
    <property type="match status" value="1"/>
</dbReference>
<dbReference type="Pfam" id="PF07690">
    <property type="entry name" value="MFS_1"/>
    <property type="match status" value="1"/>
</dbReference>
<dbReference type="SUPFAM" id="SSF103473">
    <property type="entry name" value="MFS general substrate transporter"/>
    <property type="match status" value="1"/>
</dbReference>
<evidence type="ECO:0000250" key="1"/>
<evidence type="ECO:0000255" key="2"/>
<evidence type="ECO:0000305" key="3"/>
<accession>P37593</accession>
<sequence>MTRQNENYNRYLLSDWRPENPAFWENKGKGIARRNLWISVSCLLLAFCVWMLFSAVAVNLNKIGFNFTTDQLFLLTALPSLSGAILRVPYSFMVPLFGGRKWTVLSTVILIIPCAWLGFAVQNPATPFGVFMLIALLCGFAGANFASSMGNISFFFPKARQGSALGINGGLGNLGVSVMQLIAPLVIFLPIFTFLGVQGVPQPDGSLLALTNAAWIWVPLLAVATLAAWFGMNDIGSSKASVASQLPVLKRLHLWLLSLLYLATFGSFIGFSAGFAMLAKTQFPDVNILQLAFFGPFIGALARSAGGVISDKFGGVRVTLINFIFMALFTALLFLTLPGSGAGSFSAFYLVFMGLFLTAGLGSGSTFQMIAVIFRQITLYNVKLRGGSDEQAQREAVTDTAAALGFISAIGAVGGFFIPKAFGTSLALTGSPVGAMKIFLLFYLACVLLTWLVYGRRKPKQQ</sequence>
<organism>
    <name type="scientific">Salmonella typhimurium (strain LT2 / SGSC1412 / ATCC 700720)</name>
    <dbReference type="NCBI Taxonomy" id="99287"/>
    <lineage>
        <taxon>Bacteria</taxon>
        <taxon>Pseudomonadati</taxon>
        <taxon>Pseudomonadota</taxon>
        <taxon>Gammaproteobacteria</taxon>
        <taxon>Enterobacterales</taxon>
        <taxon>Enterobacteriaceae</taxon>
        <taxon>Salmonella</taxon>
    </lineage>
</organism>
<comment type="function">
    <text evidence="1">Catalyzes nitrate uptake, nitrite uptake and nitrite export across the cytoplasmic membrane.</text>
</comment>
<comment type="subcellular location">
    <subcellularLocation>
        <location evidence="1">Cell inner membrane</location>
        <topology evidence="1">Multi-pass membrane protein</topology>
    </subcellularLocation>
</comment>
<comment type="similarity">
    <text evidence="3">Belongs to the major facilitator superfamily. Nitrate/nitrite porter (TC 2.A.1.8) family.</text>
</comment>
<reference key="1">
    <citation type="journal article" date="2001" name="Nature">
        <title>Complete genome sequence of Salmonella enterica serovar Typhimurium LT2.</title>
        <authorList>
            <person name="McClelland M."/>
            <person name="Sanderson K.E."/>
            <person name="Spieth J."/>
            <person name="Clifton S.W."/>
            <person name="Latreille P."/>
            <person name="Courtney L."/>
            <person name="Porwollik S."/>
            <person name="Ali J."/>
            <person name="Dante M."/>
            <person name="Du F."/>
            <person name="Hou S."/>
            <person name="Layman D."/>
            <person name="Leonard S."/>
            <person name="Nguyen C."/>
            <person name="Scott K."/>
            <person name="Holmes A."/>
            <person name="Grewal N."/>
            <person name="Mulvaney E."/>
            <person name="Ryan E."/>
            <person name="Sun H."/>
            <person name="Florea L."/>
            <person name="Miller W."/>
            <person name="Stoneking T."/>
            <person name="Nhan M."/>
            <person name="Waterston R."/>
            <person name="Wilson R.K."/>
        </authorList>
    </citation>
    <scope>NUCLEOTIDE SEQUENCE [LARGE SCALE GENOMIC DNA]</scope>
    <source>
        <strain>LT2 / SGSC1412 / ATCC 700720</strain>
    </source>
</reference>
<reference key="2">
    <citation type="journal article" date="1994" name="Gene">
        <title>The methyl viologen-resistance-encoding gene smvA of Salmonella typhimurium.</title>
        <authorList>
            <person name="Hongo E."/>
            <person name="Morimyo M."/>
            <person name="Mita K."/>
            <person name="Machida I."/>
            <person name="Hama-Inaba H."/>
            <person name="Tsuji H."/>
            <person name="Ichimura S."/>
            <person name="Noda Y."/>
        </authorList>
    </citation>
    <scope>NUCLEOTIDE SEQUENCE [GENOMIC DNA] OF 1-130</scope>
    <source>
        <strain>SL1303</strain>
    </source>
</reference>
<protein>
    <recommendedName>
        <fullName>Nitrate/nitrite transporter NarU</fullName>
    </recommendedName>
    <alternativeName>
        <fullName>Nitrite extrusion protein 2</fullName>
    </alternativeName>
    <alternativeName>
        <fullName>Nitrite facilitator 2</fullName>
    </alternativeName>
</protein>
<name>NARU_SALTY</name>
<proteinExistence type="inferred from homology"/>
<gene>
    <name type="primary">narU</name>
    <name type="ordered locus">STM1576</name>
</gene>
<keyword id="KW-0997">Cell inner membrane</keyword>
<keyword id="KW-1003">Cell membrane</keyword>
<keyword id="KW-0472">Membrane</keyword>
<keyword id="KW-0534">Nitrate assimilation</keyword>
<keyword id="KW-1185">Reference proteome</keyword>
<keyword id="KW-0812">Transmembrane</keyword>
<keyword id="KW-1133">Transmembrane helix</keyword>
<keyword id="KW-0813">Transport</keyword>
<feature type="chain" id="PRO_0000096730" description="Nitrate/nitrite transporter NarU">
    <location>
        <begin position="1"/>
        <end position="462"/>
    </location>
</feature>
<feature type="topological domain" description="Cytoplasmic" evidence="2">
    <location>
        <begin position="1"/>
        <end position="35"/>
    </location>
</feature>
<feature type="transmembrane region" description="Helical" evidence="2">
    <location>
        <begin position="36"/>
        <end position="56"/>
    </location>
</feature>
<feature type="topological domain" description="Periplasmic" evidence="2">
    <location>
        <begin position="57"/>
        <end position="71"/>
    </location>
</feature>
<feature type="transmembrane region" description="Helical" evidence="2">
    <location>
        <begin position="72"/>
        <end position="92"/>
    </location>
</feature>
<feature type="topological domain" description="Cytoplasmic" evidence="2">
    <location>
        <begin position="93"/>
        <end position="101"/>
    </location>
</feature>
<feature type="transmembrane region" description="Helical" evidence="2">
    <location>
        <begin position="102"/>
        <end position="122"/>
    </location>
</feature>
<feature type="topological domain" description="Periplasmic" evidence="2">
    <location>
        <begin position="123"/>
        <end position="124"/>
    </location>
</feature>
<feature type="transmembrane region" description="Helical" evidence="2">
    <location>
        <begin position="125"/>
        <end position="145"/>
    </location>
</feature>
<feature type="topological domain" description="Cytoplasmic" evidence="2">
    <location>
        <begin position="146"/>
        <end position="180"/>
    </location>
</feature>
<feature type="transmembrane region" description="Helical" evidence="2">
    <location>
        <begin position="181"/>
        <end position="201"/>
    </location>
</feature>
<feature type="topological domain" description="Periplasmic" evidence="2">
    <location>
        <begin position="202"/>
        <end position="206"/>
    </location>
</feature>
<feature type="transmembrane region" description="Helical" evidence="2">
    <location>
        <begin position="207"/>
        <end position="227"/>
    </location>
</feature>
<feature type="topological domain" description="Cytoplasmic" evidence="2">
    <location>
        <begin position="228"/>
        <end position="258"/>
    </location>
</feature>
<feature type="transmembrane region" description="Helical" evidence="2">
    <location>
        <begin position="259"/>
        <end position="279"/>
    </location>
</feature>
<feature type="topological domain" description="Periplasmic" evidence="2">
    <location>
        <begin position="280"/>
        <end position="287"/>
    </location>
</feature>
<feature type="transmembrane region" description="Helical" evidence="2">
    <location>
        <begin position="288"/>
        <end position="308"/>
    </location>
</feature>
<feature type="topological domain" description="Cytoplasmic" evidence="2">
    <location>
        <begin position="309"/>
        <end position="317"/>
    </location>
</feature>
<feature type="transmembrane region" description="Helical" evidence="2">
    <location>
        <begin position="318"/>
        <end position="338"/>
    </location>
</feature>
<feature type="topological domain" description="Periplasmic" evidence="2">
    <location>
        <begin position="339"/>
        <end position="341"/>
    </location>
</feature>
<feature type="transmembrane region" description="Helical" evidence="2">
    <location>
        <begin position="342"/>
        <end position="362"/>
    </location>
</feature>
<feature type="topological domain" description="Cytoplasmic" evidence="2">
    <location>
        <begin position="363"/>
        <end position="401"/>
    </location>
</feature>
<feature type="transmembrane region" description="Helical" evidence="2">
    <location>
        <begin position="402"/>
        <end position="422"/>
    </location>
</feature>
<feature type="topological domain" description="Periplasmic" evidence="2">
    <location>
        <begin position="423"/>
        <end position="432"/>
    </location>
</feature>
<feature type="transmembrane region" description="Helical" evidence="2">
    <location>
        <begin position="433"/>
        <end position="453"/>
    </location>
</feature>
<feature type="topological domain" description="Cytoplasmic" evidence="2">
    <location>
        <begin position="454"/>
        <end position="462"/>
    </location>
</feature>
<feature type="sequence conflict" description="In Ref. 2; BAA05054." evidence="3" ref="2">
    <original>N</original>
    <variation>D</variation>
    <location>
        <position position="61"/>
    </location>
</feature>
<feature type="sequence conflict" description="In Ref. 2; BAA05054." evidence="3" ref="2">
    <original>TPFGV</original>
    <variation>FLLSA</variation>
    <location>
        <begin position="126"/>
        <end position="130"/>
    </location>
</feature>